<protein>
    <recommendedName>
        <fullName>Transposase InsD for insertion element IS2-9</fullName>
    </recommendedName>
</protein>
<feature type="chain" id="PRO_0000393580" description="Transposase InsD for insertion element IS2-9">
    <location>
        <begin position="1"/>
        <end position="307"/>
    </location>
</feature>
<feature type="domain" description="Integrase catalytic" evidence="1">
    <location>
        <begin position="112"/>
        <end position="295"/>
    </location>
</feature>
<keyword id="KW-0233">DNA recombination</keyword>
<keyword id="KW-0238">DNA-binding</keyword>
<keyword id="KW-0814">Transposable element</keyword>
<keyword id="KW-0815">Transposition</keyword>
<reference key="1">
    <citation type="journal article" date="2006" name="Mol. Syst. Biol.">
        <title>Highly accurate genome sequences of Escherichia coli K-12 strains MG1655 and W3110.</title>
        <authorList>
            <person name="Hayashi K."/>
            <person name="Morooka N."/>
            <person name="Yamamoto Y."/>
            <person name="Fujita K."/>
            <person name="Isono K."/>
            <person name="Choi S."/>
            <person name="Ohtsubo E."/>
            <person name="Baba T."/>
            <person name="Wanner B.L."/>
            <person name="Mori H."/>
            <person name="Horiuchi T."/>
        </authorList>
    </citation>
    <scope>NUCLEOTIDE SEQUENCE [LARGE SCALE GENOMIC DNA]</scope>
    <source>
        <strain>K12 / W3110 / ATCC 27325 / DSM 5911</strain>
    </source>
</reference>
<organism>
    <name type="scientific">Escherichia coli (strain K12)</name>
    <dbReference type="NCBI Taxonomy" id="83333"/>
    <lineage>
        <taxon>Bacteria</taxon>
        <taxon>Pseudomonadati</taxon>
        <taxon>Pseudomonadota</taxon>
        <taxon>Gammaproteobacteria</taxon>
        <taxon>Enterobacterales</taxon>
        <taxon>Enterobacteriaceae</taxon>
        <taxon>Escherichia</taxon>
    </lineage>
</organism>
<name>INSD9_ECOLI</name>
<comment type="function">
    <text>Involved in the transposition of the insertion sequence IS2.</text>
</comment>
<sequence length="307" mass="35098">MWTGKKVDSARALIARGWGVSLVSRCLRVSRAQLHVILRRTDDWMDGRRSRHTDDTDVLLRIHHVIGELPTYGYRRVWALLRRQAELDGMPAINAKRVYRIMRQNALLLERKPAVPPSKRAHTGRVAVKESNQRWCSDGFEFCCDNGERLRVTFALDCCDREALHWAVTTGGFNSETVQDVMLGAVERRFGNDLPSSPVEWLTDNGSCYRANETRQFARMLGLEPKNTAVRSPESNGIAESFVKTIKRDYISIMPKPDGLTAAKNLAEAFEHYNEWHPHSALGYRSPREYLRQRACNGLSDNRCLEI</sequence>
<gene>
    <name type="ordered locus">JW5899</name>
</gene>
<accession>P0CF61</accession>
<accession>P0C5W4</accession>
<accession>P19777</accession>
<accession>P76167</accession>
<accession>P76916</accession>
<accession>P77033</accession>
<accession>Q79EJ0</accession>
<dbReference type="EMBL" id="AP009048">
    <property type="protein sequence ID" value="BAE76370.1"/>
    <property type="molecule type" value="Genomic_DNA"/>
</dbReference>
<dbReference type="SMR" id="P0CF61"/>
<dbReference type="KEGG" id="ecj:JW5899"/>
<dbReference type="HOGENOM" id="CLU_052819_0_0_6"/>
<dbReference type="PhylomeDB" id="P0CF61"/>
<dbReference type="GO" id="GO:0003677">
    <property type="term" value="F:DNA binding"/>
    <property type="evidence" value="ECO:0007669"/>
    <property type="project" value="UniProtKB-KW"/>
</dbReference>
<dbReference type="GO" id="GO:0015074">
    <property type="term" value="P:DNA integration"/>
    <property type="evidence" value="ECO:0007669"/>
    <property type="project" value="InterPro"/>
</dbReference>
<dbReference type="GO" id="GO:0006310">
    <property type="term" value="P:DNA recombination"/>
    <property type="evidence" value="ECO:0007669"/>
    <property type="project" value="UniProtKB-KW"/>
</dbReference>
<dbReference type="GO" id="GO:0032196">
    <property type="term" value="P:transposition"/>
    <property type="evidence" value="ECO:0007669"/>
    <property type="project" value="UniProtKB-KW"/>
</dbReference>
<dbReference type="Gene3D" id="3.30.420.10">
    <property type="entry name" value="Ribonuclease H-like superfamily/Ribonuclease H"/>
    <property type="match status" value="1"/>
</dbReference>
<dbReference type="InterPro" id="IPR025948">
    <property type="entry name" value="HTH-like_dom"/>
</dbReference>
<dbReference type="InterPro" id="IPR001584">
    <property type="entry name" value="Integrase_cat-core"/>
</dbReference>
<dbReference type="InterPro" id="IPR012337">
    <property type="entry name" value="RNaseH-like_sf"/>
</dbReference>
<dbReference type="InterPro" id="IPR036397">
    <property type="entry name" value="RNaseH_sf"/>
</dbReference>
<dbReference type="InterPro" id="IPR048020">
    <property type="entry name" value="Transpos_IS3"/>
</dbReference>
<dbReference type="NCBIfam" id="NF006918">
    <property type="entry name" value="PRK09409.1"/>
    <property type="match status" value="1"/>
</dbReference>
<dbReference type="NCBIfam" id="NF033516">
    <property type="entry name" value="transpos_IS3"/>
    <property type="match status" value="1"/>
</dbReference>
<dbReference type="PANTHER" id="PTHR37936">
    <property type="entry name" value="TRANSPOSASE INSC FOR INSERTION ELEMENT IS2A-RELATED"/>
    <property type="match status" value="1"/>
</dbReference>
<dbReference type="PANTHER" id="PTHR37936:SF3">
    <property type="entry name" value="TRANSPOSASE INSC FOR INSERTION ELEMENT IS2A-RELATED"/>
    <property type="match status" value="1"/>
</dbReference>
<dbReference type="Pfam" id="PF13276">
    <property type="entry name" value="HTH_21"/>
    <property type="match status" value="1"/>
</dbReference>
<dbReference type="Pfam" id="PF00665">
    <property type="entry name" value="rve"/>
    <property type="match status" value="1"/>
</dbReference>
<dbReference type="SUPFAM" id="SSF53098">
    <property type="entry name" value="Ribonuclease H-like"/>
    <property type="match status" value="1"/>
</dbReference>
<dbReference type="PROSITE" id="PS50994">
    <property type="entry name" value="INTEGRASE"/>
    <property type="match status" value="1"/>
</dbReference>
<evidence type="ECO:0000255" key="1">
    <source>
        <dbReference type="PROSITE-ProRule" id="PRU00457"/>
    </source>
</evidence>
<proteinExistence type="predicted"/>